<comment type="catalytic activity">
    <reaction evidence="1">
        <text>D-arabinose 5-phosphate + phosphoenolpyruvate + H2O = 3-deoxy-alpha-D-manno-2-octulosonate-8-phosphate + phosphate</text>
        <dbReference type="Rhea" id="RHEA:14053"/>
        <dbReference type="ChEBI" id="CHEBI:15377"/>
        <dbReference type="ChEBI" id="CHEBI:43474"/>
        <dbReference type="ChEBI" id="CHEBI:57693"/>
        <dbReference type="ChEBI" id="CHEBI:58702"/>
        <dbReference type="ChEBI" id="CHEBI:85985"/>
        <dbReference type="EC" id="2.5.1.55"/>
    </reaction>
</comment>
<comment type="pathway">
    <text evidence="1">Carbohydrate biosynthesis; 3-deoxy-D-manno-octulosonate biosynthesis; 3-deoxy-D-manno-octulosonate from D-ribulose 5-phosphate: step 2/3.</text>
</comment>
<comment type="pathway">
    <text evidence="1">Bacterial outer membrane biogenesis; lipopolysaccharide biosynthesis.</text>
</comment>
<comment type="subcellular location">
    <subcellularLocation>
        <location evidence="1">Cytoplasm</location>
    </subcellularLocation>
</comment>
<comment type="similarity">
    <text evidence="1">Belongs to the KdsA family.</text>
</comment>
<dbReference type="EC" id="2.5.1.55" evidence="1"/>
<dbReference type="EMBL" id="CP001013">
    <property type="protein sequence ID" value="ACB33444.1"/>
    <property type="molecule type" value="Genomic_DNA"/>
</dbReference>
<dbReference type="RefSeq" id="WP_012346206.1">
    <property type="nucleotide sequence ID" value="NC_010524.1"/>
</dbReference>
<dbReference type="SMR" id="B1Y4K5"/>
<dbReference type="STRING" id="395495.Lcho_1175"/>
<dbReference type="KEGG" id="lch:Lcho_1175"/>
<dbReference type="eggNOG" id="COG2877">
    <property type="taxonomic scope" value="Bacteria"/>
</dbReference>
<dbReference type="HOGENOM" id="CLU_036666_0_0_4"/>
<dbReference type="OrthoDB" id="9776934at2"/>
<dbReference type="UniPathway" id="UPA00030"/>
<dbReference type="UniPathway" id="UPA00357">
    <property type="reaction ID" value="UER00474"/>
</dbReference>
<dbReference type="Proteomes" id="UP000001693">
    <property type="component" value="Chromosome"/>
</dbReference>
<dbReference type="GO" id="GO:0005737">
    <property type="term" value="C:cytoplasm"/>
    <property type="evidence" value="ECO:0007669"/>
    <property type="project" value="UniProtKB-SubCell"/>
</dbReference>
<dbReference type="GO" id="GO:0008676">
    <property type="term" value="F:3-deoxy-8-phosphooctulonate synthase activity"/>
    <property type="evidence" value="ECO:0007669"/>
    <property type="project" value="UniProtKB-UniRule"/>
</dbReference>
<dbReference type="GO" id="GO:0019294">
    <property type="term" value="P:keto-3-deoxy-D-manno-octulosonic acid biosynthetic process"/>
    <property type="evidence" value="ECO:0007669"/>
    <property type="project" value="UniProtKB-UniRule"/>
</dbReference>
<dbReference type="Gene3D" id="3.20.20.70">
    <property type="entry name" value="Aldolase class I"/>
    <property type="match status" value="1"/>
</dbReference>
<dbReference type="HAMAP" id="MF_00056">
    <property type="entry name" value="KDO8P_synth"/>
    <property type="match status" value="1"/>
</dbReference>
<dbReference type="InterPro" id="IPR013785">
    <property type="entry name" value="Aldolase_TIM"/>
</dbReference>
<dbReference type="InterPro" id="IPR006218">
    <property type="entry name" value="DAHP1/KDSA"/>
</dbReference>
<dbReference type="InterPro" id="IPR006269">
    <property type="entry name" value="KDO8P_synthase"/>
</dbReference>
<dbReference type="NCBIfam" id="TIGR01362">
    <property type="entry name" value="KDO8P_synth"/>
    <property type="match status" value="1"/>
</dbReference>
<dbReference type="NCBIfam" id="NF003543">
    <property type="entry name" value="PRK05198.1"/>
    <property type="match status" value="1"/>
</dbReference>
<dbReference type="PANTHER" id="PTHR21057">
    <property type="entry name" value="PHOSPHO-2-DEHYDRO-3-DEOXYHEPTONATE ALDOLASE"/>
    <property type="match status" value="1"/>
</dbReference>
<dbReference type="Pfam" id="PF00793">
    <property type="entry name" value="DAHP_synth_1"/>
    <property type="match status" value="1"/>
</dbReference>
<dbReference type="SUPFAM" id="SSF51569">
    <property type="entry name" value="Aldolase"/>
    <property type="match status" value="1"/>
</dbReference>
<protein>
    <recommendedName>
        <fullName evidence="1">2-dehydro-3-deoxyphosphooctonate aldolase</fullName>
        <ecNumber evidence="1">2.5.1.55</ecNumber>
    </recommendedName>
    <alternativeName>
        <fullName evidence="1">3-deoxy-D-manno-octulosonic acid 8-phosphate synthase</fullName>
    </alternativeName>
    <alternativeName>
        <fullName evidence="1">KDO-8-phosphate synthase</fullName>
        <shortName evidence="1">KDO 8-P synthase</shortName>
        <shortName evidence="1">KDOPS</shortName>
    </alternativeName>
    <alternativeName>
        <fullName evidence="1">Phospho-2-dehydro-3-deoxyoctonate aldolase</fullName>
    </alternativeName>
</protein>
<organism>
    <name type="scientific">Leptothrix cholodnii (strain ATCC 51168 / LMG 8142 / SP-6)</name>
    <name type="common">Leptothrix discophora (strain SP-6)</name>
    <dbReference type="NCBI Taxonomy" id="395495"/>
    <lineage>
        <taxon>Bacteria</taxon>
        <taxon>Pseudomonadati</taxon>
        <taxon>Pseudomonadota</taxon>
        <taxon>Betaproteobacteria</taxon>
        <taxon>Burkholderiales</taxon>
        <taxon>Sphaerotilaceae</taxon>
        <taxon>Leptothrix</taxon>
    </lineage>
</organism>
<sequence length="285" mass="30259">MKLCGFDVGIDQPFFLIAGTCSIEGLQMSLDVAGLLKEACAGLGIPLIYKGSFDKANRSSGTTNRGLGLEAGLKILDEVRRQTGLPVLTDVHDESQVAEVASVVDVLQTPAFLCRQTDFIRAVAMSGKPVNIKKGQFLAPWDMKNVIDKARAAARDAGLSEDRFLACERGVSFGYNNLVADMTSLAEMRNTGAPVVFDVTHSVQKPGGLGGSSGGAREMVPVLARAGVAVGVAGLFMETHPDPAKAFSDGPNAVPLKHMKTLLEQLVALDRVVKTRPLLENDFSC</sequence>
<feature type="chain" id="PRO_1000091822" description="2-dehydro-3-deoxyphosphooctonate aldolase">
    <location>
        <begin position="1"/>
        <end position="285"/>
    </location>
</feature>
<accession>B1Y4K5</accession>
<name>KDSA_LEPCP</name>
<evidence type="ECO:0000255" key="1">
    <source>
        <dbReference type="HAMAP-Rule" id="MF_00056"/>
    </source>
</evidence>
<reference key="1">
    <citation type="submission" date="2008-03" db="EMBL/GenBank/DDBJ databases">
        <title>Complete sequence of Leptothrix cholodnii SP-6.</title>
        <authorList>
            <consortium name="US DOE Joint Genome Institute"/>
            <person name="Copeland A."/>
            <person name="Lucas S."/>
            <person name="Lapidus A."/>
            <person name="Glavina del Rio T."/>
            <person name="Dalin E."/>
            <person name="Tice H."/>
            <person name="Bruce D."/>
            <person name="Goodwin L."/>
            <person name="Pitluck S."/>
            <person name="Chertkov O."/>
            <person name="Brettin T."/>
            <person name="Detter J.C."/>
            <person name="Han C."/>
            <person name="Kuske C.R."/>
            <person name="Schmutz J."/>
            <person name="Larimer F."/>
            <person name="Land M."/>
            <person name="Hauser L."/>
            <person name="Kyrpides N."/>
            <person name="Lykidis A."/>
            <person name="Emerson D."/>
            <person name="Richardson P."/>
        </authorList>
    </citation>
    <scope>NUCLEOTIDE SEQUENCE [LARGE SCALE GENOMIC DNA]</scope>
    <source>
        <strain>ATCC 51168 / LMG 8142 / SP-6</strain>
    </source>
</reference>
<keyword id="KW-0963">Cytoplasm</keyword>
<keyword id="KW-0448">Lipopolysaccharide biosynthesis</keyword>
<keyword id="KW-1185">Reference proteome</keyword>
<keyword id="KW-0808">Transferase</keyword>
<proteinExistence type="inferred from homology"/>
<gene>
    <name evidence="1" type="primary">kdsA</name>
    <name type="ordered locus">Lcho_1175</name>
</gene>